<protein>
    <recommendedName>
        <fullName evidence="1">Ribonuclease Z</fullName>
        <shortName evidence="1">RNase Z</shortName>
        <ecNumber evidence="1">3.1.26.11</ecNumber>
    </recommendedName>
    <alternativeName>
        <fullName evidence="1">tRNA 3 endonuclease</fullName>
    </alternativeName>
    <alternativeName>
        <fullName evidence="1">tRNase Z</fullName>
    </alternativeName>
</protein>
<keyword id="KW-0255">Endonuclease</keyword>
<keyword id="KW-0378">Hydrolase</keyword>
<keyword id="KW-0479">Metal-binding</keyword>
<keyword id="KW-0540">Nuclease</keyword>
<keyword id="KW-0819">tRNA processing</keyword>
<keyword id="KW-0862">Zinc</keyword>
<dbReference type="EC" id="3.1.26.11" evidence="1"/>
<dbReference type="EMBL" id="CP000850">
    <property type="protein sequence ID" value="ABV96775.1"/>
    <property type="molecule type" value="Genomic_DNA"/>
</dbReference>
<dbReference type="SMR" id="A8M3K2"/>
<dbReference type="STRING" id="391037.Sare_0857"/>
<dbReference type="KEGG" id="saq:Sare_0857"/>
<dbReference type="PATRIC" id="fig|391037.6.peg.874"/>
<dbReference type="eggNOG" id="COG1234">
    <property type="taxonomic scope" value="Bacteria"/>
</dbReference>
<dbReference type="HOGENOM" id="CLU_031317_2_1_11"/>
<dbReference type="OrthoDB" id="9800940at2"/>
<dbReference type="GO" id="GO:0042781">
    <property type="term" value="F:3'-tRNA processing endoribonuclease activity"/>
    <property type="evidence" value="ECO:0007669"/>
    <property type="project" value="UniProtKB-UniRule"/>
</dbReference>
<dbReference type="GO" id="GO:0008270">
    <property type="term" value="F:zinc ion binding"/>
    <property type="evidence" value="ECO:0007669"/>
    <property type="project" value="UniProtKB-UniRule"/>
</dbReference>
<dbReference type="CDD" id="cd07717">
    <property type="entry name" value="RNaseZ_ZiPD-like_MBL-fold"/>
    <property type="match status" value="1"/>
</dbReference>
<dbReference type="Gene3D" id="3.60.15.10">
    <property type="entry name" value="Ribonuclease Z/Hydroxyacylglutathione hydrolase-like"/>
    <property type="match status" value="1"/>
</dbReference>
<dbReference type="HAMAP" id="MF_01818">
    <property type="entry name" value="RNase_Z_BN"/>
    <property type="match status" value="1"/>
</dbReference>
<dbReference type="InterPro" id="IPR001279">
    <property type="entry name" value="Metallo-B-lactamas"/>
</dbReference>
<dbReference type="InterPro" id="IPR036866">
    <property type="entry name" value="RibonucZ/Hydroxyglut_hydro"/>
</dbReference>
<dbReference type="InterPro" id="IPR013471">
    <property type="entry name" value="RNase_Z/BN"/>
</dbReference>
<dbReference type="NCBIfam" id="NF000805">
    <property type="entry name" value="PRK00055.2-3"/>
    <property type="match status" value="1"/>
</dbReference>
<dbReference type="PANTHER" id="PTHR46018">
    <property type="entry name" value="ZINC PHOSPHODIESTERASE ELAC PROTEIN 1"/>
    <property type="match status" value="1"/>
</dbReference>
<dbReference type="PANTHER" id="PTHR46018:SF2">
    <property type="entry name" value="ZINC PHOSPHODIESTERASE ELAC PROTEIN 1"/>
    <property type="match status" value="1"/>
</dbReference>
<dbReference type="Pfam" id="PF00753">
    <property type="entry name" value="Lactamase_B"/>
    <property type="match status" value="1"/>
</dbReference>
<dbReference type="Pfam" id="PF12706">
    <property type="entry name" value="Lactamase_B_2"/>
    <property type="match status" value="1"/>
</dbReference>
<dbReference type="SUPFAM" id="SSF56281">
    <property type="entry name" value="Metallo-hydrolase/oxidoreductase"/>
    <property type="match status" value="1"/>
</dbReference>
<evidence type="ECO:0000255" key="1">
    <source>
        <dbReference type="HAMAP-Rule" id="MF_01818"/>
    </source>
</evidence>
<proteinExistence type="inferred from homology"/>
<sequence>MSTRELVVLGTASQAPTRTRNHNGYVLRWDDEVILFDPGEGSQRQLLYSSVTATDLTRICVTHFHGDHCLGLPGTIQRLSLDRVPHPVAVHFPAGGADYFTRLRYASSFHETAELAVMPIDTDGQQIAVRNGTLEARRLRHPIETYGYRLVEPDGCRMLPERLSAHGIAGPAVGELLRVGHLDVNGRRVTRAEVSAPRPGQRFAFVMDTGLCDAVYALAEHADLLVIESTFLASETALAAEVGHLTAAQAARVATESGVRRLVLTHFSQRYPDLSRFAAEAREHFTGDLVIAEELMTVGIPPRRVPSAG</sequence>
<organism>
    <name type="scientific">Salinispora arenicola (strain CNS-205)</name>
    <dbReference type="NCBI Taxonomy" id="391037"/>
    <lineage>
        <taxon>Bacteria</taxon>
        <taxon>Bacillati</taxon>
        <taxon>Actinomycetota</taxon>
        <taxon>Actinomycetes</taxon>
        <taxon>Micromonosporales</taxon>
        <taxon>Micromonosporaceae</taxon>
        <taxon>Salinispora</taxon>
    </lineage>
</organism>
<comment type="function">
    <text evidence="1">Zinc phosphodiesterase, which displays some tRNA 3'-processing endonuclease activity. Probably involved in tRNA maturation, by removing a 3'-trailer from precursor tRNA.</text>
</comment>
<comment type="catalytic activity">
    <reaction evidence="1">
        <text>Endonucleolytic cleavage of RNA, removing extra 3' nucleotides from tRNA precursor, generating 3' termini of tRNAs. A 3'-hydroxy group is left at the tRNA terminus and a 5'-phosphoryl group is left at the trailer molecule.</text>
        <dbReference type="EC" id="3.1.26.11"/>
    </reaction>
</comment>
<comment type="cofactor">
    <cofactor evidence="1">
        <name>Zn(2+)</name>
        <dbReference type="ChEBI" id="CHEBI:29105"/>
    </cofactor>
    <text evidence="1">Binds 2 Zn(2+) ions.</text>
</comment>
<comment type="subunit">
    <text evidence="1">Homodimer.</text>
</comment>
<comment type="similarity">
    <text evidence="1">Belongs to the RNase Z family.</text>
</comment>
<reference key="1">
    <citation type="submission" date="2007-10" db="EMBL/GenBank/DDBJ databases">
        <title>Complete sequence of Salinispora arenicola CNS-205.</title>
        <authorList>
            <consortium name="US DOE Joint Genome Institute"/>
            <person name="Copeland A."/>
            <person name="Lucas S."/>
            <person name="Lapidus A."/>
            <person name="Barry K."/>
            <person name="Glavina del Rio T."/>
            <person name="Dalin E."/>
            <person name="Tice H."/>
            <person name="Pitluck S."/>
            <person name="Foster B."/>
            <person name="Schmutz J."/>
            <person name="Larimer F."/>
            <person name="Land M."/>
            <person name="Hauser L."/>
            <person name="Kyrpides N."/>
            <person name="Ivanova N."/>
            <person name="Jensen P.R."/>
            <person name="Moore B.S."/>
            <person name="Penn K."/>
            <person name="Jenkins C."/>
            <person name="Udwary D."/>
            <person name="Xiang L."/>
            <person name="Gontang E."/>
            <person name="Richardson P."/>
        </authorList>
    </citation>
    <scope>NUCLEOTIDE SEQUENCE [LARGE SCALE GENOMIC DNA]</scope>
    <source>
        <strain>CNS-205</strain>
    </source>
</reference>
<accession>A8M3K2</accession>
<name>RNZ_SALAI</name>
<feature type="chain" id="PRO_1000088340" description="Ribonuclease Z">
    <location>
        <begin position="1"/>
        <end position="309"/>
    </location>
</feature>
<feature type="active site" description="Proton acceptor" evidence="1">
    <location>
        <position position="67"/>
    </location>
</feature>
<feature type="binding site" evidence="1">
    <location>
        <position position="63"/>
    </location>
    <ligand>
        <name>Zn(2+)</name>
        <dbReference type="ChEBI" id="CHEBI:29105"/>
        <label>1</label>
        <note>catalytic</note>
    </ligand>
</feature>
<feature type="binding site" evidence="1">
    <location>
        <position position="65"/>
    </location>
    <ligand>
        <name>Zn(2+)</name>
        <dbReference type="ChEBI" id="CHEBI:29105"/>
        <label>1</label>
        <note>catalytic</note>
    </ligand>
</feature>
<feature type="binding site" evidence="1">
    <location>
        <position position="67"/>
    </location>
    <ligand>
        <name>Zn(2+)</name>
        <dbReference type="ChEBI" id="CHEBI:29105"/>
        <label>2</label>
        <note>catalytic</note>
    </ligand>
</feature>
<feature type="binding site" evidence="1">
    <location>
        <position position="68"/>
    </location>
    <ligand>
        <name>Zn(2+)</name>
        <dbReference type="ChEBI" id="CHEBI:29105"/>
        <label>2</label>
        <note>catalytic</note>
    </ligand>
</feature>
<feature type="binding site" evidence="1">
    <location>
        <position position="141"/>
    </location>
    <ligand>
        <name>Zn(2+)</name>
        <dbReference type="ChEBI" id="CHEBI:29105"/>
        <label>1</label>
        <note>catalytic</note>
    </ligand>
</feature>
<feature type="binding site" evidence="1">
    <location>
        <position position="208"/>
    </location>
    <ligand>
        <name>Zn(2+)</name>
        <dbReference type="ChEBI" id="CHEBI:29105"/>
        <label>1</label>
        <note>catalytic</note>
    </ligand>
</feature>
<feature type="binding site" evidence="1">
    <location>
        <position position="208"/>
    </location>
    <ligand>
        <name>Zn(2+)</name>
        <dbReference type="ChEBI" id="CHEBI:29105"/>
        <label>2</label>
        <note>catalytic</note>
    </ligand>
</feature>
<feature type="binding site" evidence="1">
    <location>
        <position position="266"/>
    </location>
    <ligand>
        <name>Zn(2+)</name>
        <dbReference type="ChEBI" id="CHEBI:29105"/>
        <label>2</label>
        <note>catalytic</note>
    </ligand>
</feature>
<gene>
    <name evidence="1" type="primary">rnz</name>
    <name type="ordered locus">Sare_0857</name>
</gene>